<keyword id="KW-0963">Cytoplasm</keyword>
<keyword id="KW-0227">DNA damage</keyword>
<keyword id="KW-0228">DNA excision</keyword>
<keyword id="KW-0234">DNA repair</keyword>
<keyword id="KW-0267">Excision nuclease</keyword>
<keyword id="KW-0742">SOS response</keyword>
<protein>
    <recommendedName>
        <fullName evidence="1">UvrABC system protein C</fullName>
        <shortName evidence="1">Protein UvrC</shortName>
    </recommendedName>
    <alternativeName>
        <fullName evidence="1">Excinuclease ABC subunit C</fullName>
    </alternativeName>
</protein>
<comment type="function">
    <text evidence="1">The UvrABC repair system catalyzes the recognition and processing of DNA lesions. UvrC both incises the 5' and 3' sides of the lesion. The N-terminal half is responsible for the 3' incision and the C-terminal half is responsible for the 5' incision.</text>
</comment>
<comment type="subunit">
    <text evidence="1">Interacts with UvrB in an incision complex.</text>
</comment>
<comment type="subcellular location">
    <subcellularLocation>
        <location evidence="1">Cytoplasm</location>
    </subcellularLocation>
</comment>
<comment type="similarity">
    <text evidence="1">Belongs to the UvrC family.</text>
</comment>
<dbReference type="EMBL" id="CP000720">
    <property type="protein sequence ID" value="ABS48878.1"/>
    <property type="molecule type" value="Genomic_DNA"/>
</dbReference>
<dbReference type="RefSeq" id="WP_002220477.1">
    <property type="nucleotide sequence ID" value="NC_009708.1"/>
</dbReference>
<dbReference type="SMR" id="A7FIZ3"/>
<dbReference type="GeneID" id="57976715"/>
<dbReference type="KEGG" id="ypi:YpsIP31758_2252"/>
<dbReference type="HOGENOM" id="CLU_014841_3_2_6"/>
<dbReference type="Proteomes" id="UP000002412">
    <property type="component" value="Chromosome"/>
</dbReference>
<dbReference type="GO" id="GO:0005737">
    <property type="term" value="C:cytoplasm"/>
    <property type="evidence" value="ECO:0007669"/>
    <property type="project" value="UniProtKB-SubCell"/>
</dbReference>
<dbReference type="GO" id="GO:0009380">
    <property type="term" value="C:excinuclease repair complex"/>
    <property type="evidence" value="ECO:0007669"/>
    <property type="project" value="InterPro"/>
</dbReference>
<dbReference type="GO" id="GO:0003677">
    <property type="term" value="F:DNA binding"/>
    <property type="evidence" value="ECO:0007669"/>
    <property type="project" value="UniProtKB-UniRule"/>
</dbReference>
<dbReference type="GO" id="GO:0009381">
    <property type="term" value="F:excinuclease ABC activity"/>
    <property type="evidence" value="ECO:0007669"/>
    <property type="project" value="UniProtKB-UniRule"/>
</dbReference>
<dbReference type="GO" id="GO:0006289">
    <property type="term" value="P:nucleotide-excision repair"/>
    <property type="evidence" value="ECO:0007669"/>
    <property type="project" value="UniProtKB-UniRule"/>
</dbReference>
<dbReference type="GO" id="GO:0009432">
    <property type="term" value="P:SOS response"/>
    <property type="evidence" value="ECO:0007669"/>
    <property type="project" value="UniProtKB-UniRule"/>
</dbReference>
<dbReference type="CDD" id="cd10434">
    <property type="entry name" value="GIY-YIG_UvrC_Cho"/>
    <property type="match status" value="1"/>
</dbReference>
<dbReference type="FunFam" id="1.10.150.20:FF:000005">
    <property type="entry name" value="UvrABC system protein C"/>
    <property type="match status" value="1"/>
</dbReference>
<dbReference type="FunFam" id="3.30.420.340:FF:000001">
    <property type="entry name" value="UvrABC system protein C"/>
    <property type="match status" value="1"/>
</dbReference>
<dbReference type="FunFam" id="3.40.1440.10:FF:000001">
    <property type="entry name" value="UvrABC system protein C"/>
    <property type="match status" value="1"/>
</dbReference>
<dbReference type="FunFam" id="4.10.860.10:FF:000002">
    <property type="entry name" value="UvrABC system protein C"/>
    <property type="match status" value="1"/>
</dbReference>
<dbReference type="Gene3D" id="1.10.150.20">
    <property type="entry name" value="5' to 3' exonuclease, C-terminal subdomain"/>
    <property type="match status" value="1"/>
</dbReference>
<dbReference type="Gene3D" id="3.40.1440.10">
    <property type="entry name" value="GIY-YIG endonuclease"/>
    <property type="match status" value="1"/>
</dbReference>
<dbReference type="Gene3D" id="4.10.860.10">
    <property type="entry name" value="UVR domain"/>
    <property type="match status" value="1"/>
</dbReference>
<dbReference type="Gene3D" id="3.30.420.340">
    <property type="entry name" value="UvrC, RNAse H endonuclease domain"/>
    <property type="match status" value="1"/>
</dbReference>
<dbReference type="HAMAP" id="MF_00203">
    <property type="entry name" value="UvrC"/>
    <property type="match status" value="1"/>
</dbReference>
<dbReference type="InterPro" id="IPR000305">
    <property type="entry name" value="GIY-YIG_endonuc"/>
</dbReference>
<dbReference type="InterPro" id="IPR035901">
    <property type="entry name" value="GIY-YIG_endonuc_sf"/>
</dbReference>
<dbReference type="InterPro" id="IPR047296">
    <property type="entry name" value="GIY-YIG_UvrC_Cho"/>
</dbReference>
<dbReference type="InterPro" id="IPR003583">
    <property type="entry name" value="Hlx-hairpin-Hlx_DNA-bd_motif"/>
</dbReference>
<dbReference type="InterPro" id="IPR010994">
    <property type="entry name" value="RuvA_2-like"/>
</dbReference>
<dbReference type="InterPro" id="IPR001943">
    <property type="entry name" value="UVR_dom"/>
</dbReference>
<dbReference type="InterPro" id="IPR036876">
    <property type="entry name" value="UVR_dom_sf"/>
</dbReference>
<dbReference type="InterPro" id="IPR050066">
    <property type="entry name" value="UvrABC_protein_C"/>
</dbReference>
<dbReference type="InterPro" id="IPR004791">
    <property type="entry name" value="UvrC"/>
</dbReference>
<dbReference type="InterPro" id="IPR001162">
    <property type="entry name" value="UvrC_RNase_H_dom"/>
</dbReference>
<dbReference type="InterPro" id="IPR038476">
    <property type="entry name" value="UvrC_RNase_H_dom_sf"/>
</dbReference>
<dbReference type="NCBIfam" id="NF001824">
    <property type="entry name" value="PRK00558.1-5"/>
    <property type="match status" value="1"/>
</dbReference>
<dbReference type="NCBIfam" id="TIGR00194">
    <property type="entry name" value="uvrC"/>
    <property type="match status" value="1"/>
</dbReference>
<dbReference type="PANTHER" id="PTHR30562:SF1">
    <property type="entry name" value="UVRABC SYSTEM PROTEIN C"/>
    <property type="match status" value="1"/>
</dbReference>
<dbReference type="PANTHER" id="PTHR30562">
    <property type="entry name" value="UVRC/OXIDOREDUCTASE"/>
    <property type="match status" value="1"/>
</dbReference>
<dbReference type="Pfam" id="PF01541">
    <property type="entry name" value="GIY-YIG"/>
    <property type="match status" value="1"/>
</dbReference>
<dbReference type="Pfam" id="PF14520">
    <property type="entry name" value="HHH_5"/>
    <property type="match status" value="1"/>
</dbReference>
<dbReference type="Pfam" id="PF02151">
    <property type="entry name" value="UVR"/>
    <property type="match status" value="1"/>
</dbReference>
<dbReference type="Pfam" id="PF22920">
    <property type="entry name" value="UvrC_RNaseH"/>
    <property type="match status" value="1"/>
</dbReference>
<dbReference type="Pfam" id="PF08459">
    <property type="entry name" value="UvrC_RNaseH_dom"/>
    <property type="match status" value="1"/>
</dbReference>
<dbReference type="SMART" id="SM00465">
    <property type="entry name" value="GIYc"/>
    <property type="match status" value="1"/>
</dbReference>
<dbReference type="SMART" id="SM00278">
    <property type="entry name" value="HhH1"/>
    <property type="match status" value="2"/>
</dbReference>
<dbReference type="SUPFAM" id="SSF46600">
    <property type="entry name" value="C-terminal UvrC-binding domain of UvrB"/>
    <property type="match status" value="1"/>
</dbReference>
<dbReference type="SUPFAM" id="SSF82771">
    <property type="entry name" value="GIY-YIG endonuclease"/>
    <property type="match status" value="1"/>
</dbReference>
<dbReference type="SUPFAM" id="SSF47781">
    <property type="entry name" value="RuvA domain 2-like"/>
    <property type="match status" value="1"/>
</dbReference>
<dbReference type="PROSITE" id="PS50164">
    <property type="entry name" value="GIY_YIG"/>
    <property type="match status" value="1"/>
</dbReference>
<dbReference type="PROSITE" id="PS50151">
    <property type="entry name" value="UVR"/>
    <property type="match status" value="1"/>
</dbReference>
<dbReference type="PROSITE" id="PS50165">
    <property type="entry name" value="UVRC"/>
    <property type="match status" value="1"/>
</dbReference>
<name>UVRC_YERP3</name>
<feature type="chain" id="PRO_1000077860" description="UvrABC system protein C">
    <location>
        <begin position="1"/>
        <end position="610"/>
    </location>
</feature>
<feature type="domain" description="GIY-YIG" evidence="1">
    <location>
        <begin position="16"/>
        <end position="94"/>
    </location>
</feature>
<feature type="domain" description="UVR" evidence="1">
    <location>
        <begin position="204"/>
        <end position="239"/>
    </location>
</feature>
<gene>
    <name evidence="1" type="primary">uvrC</name>
    <name type="ordered locus">YpsIP31758_2252</name>
</gene>
<organism>
    <name type="scientific">Yersinia pseudotuberculosis serotype O:1b (strain IP 31758)</name>
    <dbReference type="NCBI Taxonomy" id="349747"/>
    <lineage>
        <taxon>Bacteria</taxon>
        <taxon>Pseudomonadati</taxon>
        <taxon>Pseudomonadota</taxon>
        <taxon>Gammaproteobacteria</taxon>
        <taxon>Enterobacterales</taxon>
        <taxon>Yersiniaceae</taxon>
        <taxon>Yersinia</taxon>
    </lineage>
</organism>
<accession>A7FIZ3</accession>
<evidence type="ECO:0000255" key="1">
    <source>
        <dbReference type="HAMAP-Rule" id="MF_00203"/>
    </source>
</evidence>
<proteinExistence type="inferred from homology"/>
<reference key="1">
    <citation type="journal article" date="2007" name="PLoS Genet.">
        <title>The complete genome sequence of Yersinia pseudotuberculosis IP31758, the causative agent of Far East scarlet-like fever.</title>
        <authorList>
            <person name="Eppinger M."/>
            <person name="Rosovitz M.J."/>
            <person name="Fricke W.F."/>
            <person name="Rasko D.A."/>
            <person name="Kokorina G."/>
            <person name="Fayolle C."/>
            <person name="Lindler L.E."/>
            <person name="Carniel E."/>
            <person name="Ravel J."/>
        </authorList>
    </citation>
    <scope>NUCLEOTIDE SEQUENCE [LARGE SCALE GENOMIC DNA]</scope>
    <source>
        <strain>IP 31758</strain>
    </source>
</reference>
<sequence>MTDLFDYKEFLKTVTSQPGVYRMYDTAGTVIYVGKAKDLKKRLTSYFRAQVANRKTETLVKNIAQIDVTVTHTETEALLLEHNYIKLYQPRYNVLLRDDKSYPLIFLSADEHPRLAVHRGAKHEKGEYFGPFPNSYAVRETLALLQKLFPVRQCENSVYRNRSRPCLQYQIGRCSGPCVEGLVSEEEYQRQVDYVRLFLSGKDQQVLTQLITRMEEASQQLHFEDAARIRDQIQAVRRVTEQQFVSGDSEDLDVIGVAFDAGLACVHVLFIRLGKVLGSRSYFPKVPAGTELSEVVQTFVGQFYLQGSQGRTLPGEILLDFTLTEKDLLASSLSELAGRKIQIQSRPRGDRARYLKLARTNASTALITRLSQQSTIHQRMKELAKVLKLDEINRMECFDISHTMGEQTVASCVVFDANGPVRSEYRRYNISGITPGDDYAAMAQVLKRRYGKALDDQKIPDVIFIDGGKGQLSQAFDVFASLNVPWDKQKPLLVGVAKGSDRKAGLETLFLASEGEGFSLPPDSPALHLIQHIRDDSHNHAITGHRQRRSKVKNTSALEMIEGVGPKRRQVLLKYMGGLQPLFNASVEEIAKVPGISQALAEKIHNALKH</sequence>